<protein>
    <recommendedName>
        <fullName>Peptidyl-prolyl cis-trans isomerase FPR2</fullName>
        <shortName>PPIase FPR2</shortName>
        <ecNumber evidence="2">5.2.1.8</ecNumber>
    </recommendedName>
    <alternativeName>
        <fullName evidence="4">13-kDa membrane-associated FK506-binding protein</fullName>
        <shortName>FKBP-13</shortName>
    </alternativeName>
    <alternativeName>
        <fullName>FK506-binding protein 2</fullName>
    </alternativeName>
    <alternativeName>
        <fullName>FKBP proline rotamase 2</fullName>
    </alternativeName>
    <alternativeName>
        <fullName>FKBP-15</fullName>
    </alternativeName>
</protein>
<organism>
    <name type="scientific">Saccharomyces cerevisiae (strain ATCC 204508 / S288c)</name>
    <name type="common">Baker's yeast</name>
    <dbReference type="NCBI Taxonomy" id="559292"/>
    <lineage>
        <taxon>Eukaryota</taxon>
        <taxon>Fungi</taxon>
        <taxon>Dikarya</taxon>
        <taxon>Ascomycota</taxon>
        <taxon>Saccharomycotina</taxon>
        <taxon>Saccharomycetes</taxon>
        <taxon>Saccharomycetales</taxon>
        <taxon>Saccharomycetaceae</taxon>
        <taxon>Saccharomyces</taxon>
    </lineage>
</organism>
<gene>
    <name type="primary">FPR2</name>
    <name type="synonym">FKB2</name>
    <name type="ordered locus">YDR519W</name>
    <name type="ORF">D9719.24</name>
</gene>
<name>FKBP2_YEAST</name>
<sequence length="135" mass="14487">MMFNIYLFVTFFSTILAGSLSDLEIGIIKRIPVEDCLIKAMPGDKVKVHYTGSLLESGTVFDSSYSRGSPIAFELGVGRVIKGWDQGVAGMCVGEKRKLQIPSSLAYGERGVPGVIPPSADLVFDVELVDVKSAA</sequence>
<accession>P32472</accession>
<accession>D6VTE0</accession>
<reference key="1">
    <citation type="journal article" date="1992" name="Yeast">
        <title>Saccharomyces cerevisiae contains a homolog of human FKBP-13, a membrane-associated FK506/rapamycin binding protein.</title>
        <authorList>
            <person name="Partaledis J.A."/>
            <person name="Fleming M.A."/>
            <person name="Harding M.W."/>
            <person name="Berlin V."/>
        </authorList>
    </citation>
    <scope>NUCLEOTIDE SEQUENCE [GENOMIC DNA]</scope>
</reference>
<reference key="2">
    <citation type="journal article" date="1992" name="Proc. Natl. Acad. Sci. U.S.A.">
        <title>Yeast FKBP-13 is a membrane-associated FK506-binding protein encoded by the nonessential gene FKB2.</title>
        <authorList>
            <person name="Nielsen J.B."/>
            <person name="Foor F."/>
            <person name="Siekerka J.J."/>
            <person name="Hsu M.J."/>
            <person name="Ramadan N."/>
            <person name="Morin N."/>
            <person name="Shafiee A."/>
            <person name="Dahl A."/>
            <person name="Brizuela L."/>
            <person name="Chrebet G."/>
            <person name="Bostian K.A."/>
            <person name="Parent S.A."/>
        </authorList>
    </citation>
    <scope>NUCLEOTIDE SEQUENCE [GENOMIC DNA]</scope>
    <scope>PROTEIN SEQUENCE OF 18-54</scope>
    <scope>FUNCTION</scope>
    <scope>CATALYTIC ACTIVITY</scope>
    <scope>ACTIVITY REGULATION</scope>
</reference>
<reference key="3">
    <citation type="journal article" date="1997" name="Nature">
        <title>The nucleotide sequence of Saccharomyces cerevisiae chromosome IV.</title>
        <authorList>
            <person name="Jacq C."/>
            <person name="Alt-Moerbe J."/>
            <person name="Andre B."/>
            <person name="Arnold W."/>
            <person name="Bahr A."/>
            <person name="Ballesta J.P.G."/>
            <person name="Bargues M."/>
            <person name="Baron L."/>
            <person name="Becker A."/>
            <person name="Biteau N."/>
            <person name="Bloecker H."/>
            <person name="Blugeon C."/>
            <person name="Boskovic J."/>
            <person name="Brandt P."/>
            <person name="Brueckner M."/>
            <person name="Buitrago M.J."/>
            <person name="Coster F."/>
            <person name="Delaveau T."/>
            <person name="del Rey F."/>
            <person name="Dujon B."/>
            <person name="Eide L.G."/>
            <person name="Garcia-Cantalejo J.M."/>
            <person name="Goffeau A."/>
            <person name="Gomez-Peris A."/>
            <person name="Granotier C."/>
            <person name="Hanemann V."/>
            <person name="Hankeln T."/>
            <person name="Hoheisel J.D."/>
            <person name="Jaeger W."/>
            <person name="Jimenez A."/>
            <person name="Jonniaux J.-L."/>
            <person name="Kraemer C."/>
            <person name="Kuester H."/>
            <person name="Laamanen P."/>
            <person name="Legros Y."/>
            <person name="Louis E.J."/>
            <person name="Moeller-Rieker S."/>
            <person name="Monnet A."/>
            <person name="Moro M."/>
            <person name="Mueller-Auer S."/>
            <person name="Nussbaumer B."/>
            <person name="Paricio N."/>
            <person name="Paulin L."/>
            <person name="Perea J."/>
            <person name="Perez-Alonso M."/>
            <person name="Perez-Ortin J.E."/>
            <person name="Pohl T.M."/>
            <person name="Prydz H."/>
            <person name="Purnelle B."/>
            <person name="Rasmussen S.W."/>
            <person name="Remacha M.A."/>
            <person name="Revuelta J.L."/>
            <person name="Rieger M."/>
            <person name="Salom D."/>
            <person name="Saluz H.P."/>
            <person name="Saiz J.E."/>
            <person name="Saren A.-M."/>
            <person name="Schaefer M."/>
            <person name="Scharfe M."/>
            <person name="Schmidt E.R."/>
            <person name="Schneider C."/>
            <person name="Scholler P."/>
            <person name="Schwarz S."/>
            <person name="Soler-Mira A."/>
            <person name="Urrestarazu L.A."/>
            <person name="Verhasselt P."/>
            <person name="Vissers S."/>
            <person name="Voet M."/>
            <person name="Volckaert G."/>
            <person name="Wagner G."/>
            <person name="Wambutt R."/>
            <person name="Wedler E."/>
            <person name="Wedler H."/>
            <person name="Woelfl S."/>
            <person name="Harris D.E."/>
            <person name="Bowman S."/>
            <person name="Brown D."/>
            <person name="Churcher C.M."/>
            <person name="Connor R."/>
            <person name="Dedman K."/>
            <person name="Gentles S."/>
            <person name="Hamlin N."/>
            <person name="Hunt S."/>
            <person name="Jones L."/>
            <person name="McDonald S."/>
            <person name="Murphy L.D."/>
            <person name="Niblett D."/>
            <person name="Odell C."/>
            <person name="Oliver K."/>
            <person name="Rajandream M.A."/>
            <person name="Richards C."/>
            <person name="Shore L."/>
            <person name="Walsh S.V."/>
            <person name="Barrell B.G."/>
            <person name="Dietrich F.S."/>
            <person name="Mulligan J.T."/>
            <person name="Allen E."/>
            <person name="Araujo R."/>
            <person name="Aviles E."/>
            <person name="Berno A."/>
            <person name="Carpenter J."/>
            <person name="Chen E."/>
            <person name="Cherry J.M."/>
            <person name="Chung E."/>
            <person name="Duncan M."/>
            <person name="Hunicke-Smith S."/>
            <person name="Hyman R.W."/>
            <person name="Komp C."/>
            <person name="Lashkari D."/>
            <person name="Lew H."/>
            <person name="Lin D."/>
            <person name="Mosedale D."/>
            <person name="Nakahara K."/>
            <person name="Namath A."/>
            <person name="Oefner P."/>
            <person name="Oh C."/>
            <person name="Petel F.X."/>
            <person name="Roberts D."/>
            <person name="Schramm S."/>
            <person name="Schroeder M."/>
            <person name="Shogren T."/>
            <person name="Shroff N."/>
            <person name="Winant A."/>
            <person name="Yelton M.A."/>
            <person name="Botstein D."/>
            <person name="Davis R.W."/>
            <person name="Johnston M."/>
            <person name="Andrews S."/>
            <person name="Brinkman R."/>
            <person name="Cooper J."/>
            <person name="Ding H."/>
            <person name="Du Z."/>
            <person name="Favello A."/>
            <person name="Fulton L."/>
            <person name="Gattung S."/>
            <person name="Greco T."/>
            <person name="Hallsworth K."/>
            <person name="Hawkins J."/>
            <person name="Hillier L.W."/>
            <person name="Jier M."/>
            <person name="Johnson D."/>
            <person name="Johnston L."/>
            <person name="Kirsten J."/>
            <person name="Kucaba T."/>
            <person name="Langston Y."/>
            <person name="Latreille P."/>
            <person name="Le T."/>
            <person name="Mardis E."/>
            <person name="Menezes S."/>
            <person name="Miller N."/>
            <person name="Nhan M."/>
            <person name="Pauley A."/>
            <person name="Peluso D."/>
            <person name="Rifkin L."/>
            <person name="Riles L."/>
            <person name="Taich A."/>
            <person name="Trevaskis E."/>
            <person name="Vignati D."/>
            <person name="Wilcox L."/>
            <person name="Wohldman P."/>
            <person name="Vaudin M."/>
            <person name="Wilson R."/>
            <person name="Waterston R."/>
            <person name="Albermann K."/>
            <person name="Hani J."/>
            <person name="Heumann K."/>
            <person name="Kleine K."/>
            <person name="Mewes H.-W."/>
            <person name="Zollner A."/>
            <person name="Zaccaria P."/>
        </authorList>
    </citation>
    <scope>NUCLEOTIDE SEQUENCE [LARGE SCALE GENOMIC DNA]</scope>
    <source>
        <strain>ATCC 204508 / S288c</strain>
    </source>
</reference>
<reference key="4">
    <citation type="journal article" date="2014" name="G3 (Bethesda)">
        <title>The reference genome sequence of Saccharomyces cerevisiae: Then and now.</title>
        <authorList>
            <person name="Engel S.R."/>
            <person name="Dietrich F.S."/>
            <person name="Fisk D.G."/>
            <person name="Binkley G."/>
            <person name="Balakrishnan R."/>
            <person name="Costanzo M.C."/>
            <person name="Dwight S.S."/>
            <person name="Hitz B.C."/>
            <person name="Karra K."/>
            <person name="Nash R.S."/>
            <person name="Weng S."/>
            <person name="Wong E.D."/>
            <person name="Lloyd P."/>
            <person name="Skrzypek M.S."/>
            <person name="Miyasato S.R."/>
            <person name="Simison M."/>
            <person name="Cherry J.M."/>
        </authorList>
    </citation>
    <scope>GENOME REANNOTATION</scope>
    <source>
        <strain>ATCC 204508 / S288c</strain>
    </source>
</reference>
<reference key="5">
    <citation type="journal article" date="2007" name="Genome Res.">
        <title>Approaching a complete repository of sequence-verified protein-encoding clones for Saccharomyces cerevisiae.</title>
        <authorList>
            <person name="Hu Y."/>
            <person name="Rolfs A."/>
            <person name="Bhullar B."/>
            <person name="Murthy T.V.S."/>
            <person name="Zhu C."/>
            <person name="Berger M.F."/>
            <person name="Camargo A.A."/>
            <person name="Kelley F."/>
            <person name="McCarron S."/>
            <person name="Jepson D."/>
            <person name="Richardson A."/>
            <person name="Raphael J."/>
            <person name="Moreira D."/>
            <person name="Taycher E."/>
            <person name="Zuo D."/>
            <person name="Mohr S."/>
            <person name="Kane M.F."/>
            <person name="Williamson J."/>
            <person name="Simpson A.J.G."/>
            <person name="Bulyk M.L."/>
            <person name="Harlow E."/>
            <person name="Marsischky G."/>
            <person name="Kolodner R.D."/>
            <person name="LaBaer J."/>
        </authorList>
    </citation>
    <scope>NUCLEOTIDE SEQUENCE [GENOMIC DNA]</scope>
    <source>
        <strain>ATCC 204508 / S288c</strain>
    </source>
</reference>
<reference key="6">
    <citation type="journal article" date="2003" name="Nature">
        <title>Global analysis of protein expression in yeast.</title>
        <authorList>
            <person name="Ghaemmaghami S."/>
            <person name="Huh W.-K."/>
            <person name="Bower K."/>
            <person name="Howson R.W."/>
            <person name="Belle A."/>
            <person name="Dephoure N."/>
            <person name="O'Shea E.K."/>
            <person name="Weissman J.S."/>
        </authorList>
    </citation>
    <scope>LEVEL OF PROTEIN EXPRESSION [LARGE SCALE ANALYSIS]</scope>
</reference>
<proteinExistence type="evidence at protein level"/>
<comment type="function">
    <text evidence="6">PPIases accelerate the folding of proteins. It catalyzes the cis-trans isomerization of proline imidic peptide bonds in oligopeptides. FKBP-13 may play a role in protein trafficking in the ER.</text>
</comment>
<comment type="catalytic activity">
    <reaction evidence="2">
        <text>[protein]-peptidylproline (omega=180) = [protein]-peptidylproline (omega=0)</text>
        <dbReference type="Rhea" id="RHEA:16237"/>
        <dbReference type="Rhea" id="RHEA-COMP:10747"/>
        <dbReference type="Rhea" id="RHEA-COMP:10748"/>
        <dbReference type="ChEBI" id="CHEBI:83833"/>
        <dbReference type="ChEBI" id="CHEBI:83834"/>
        <dbReference type="EC" id="5.2.1.8"/>
    </reaction>
</comment>
<comment type="activity regulation">
    <text evidence="2">Inhibited by both FK506 and rapamycin. Binds FK506 with 15-fold lower affinity than FKB1.</text>
</comment>
<comment type="subcellular location">
    <subcellularLocation>
        <location evidence="5">Endoplasmic reticulum membrane</location>
        <topology evidence="5">Peripheral membrane protein</topology>
    </subcellularLocation>
    <text evidence="6">Is not secreted and probably localized in the endoplasmic reticulum.</text>
</comment>
<comment type="miscellaneous">
    <text evidence="3">Present with 5400 molecules/cell in log phase SD medium.</text>
</comment>
<comment type="similarity">
    <text evidence="5">Belongs to the FKBP-type PPIase family. FKBP2 subfamily.</text>
</comment>
<dbReference type="EC" id="5.2.1.8" evidence="2"/>
<dbReference type="EMBL" id="M90646">
    <property type="protein sequence ID" value="AAA34604.1"/>
    <property type="molecule type" value="Genomic_DNA"/>
</dbReference>
<dbReference type="EMBL" id="M90767">
    <property type="protein sequence ID" value="AAA34605.1"/>
    <property type="molecule type" value="Genomic_DNA"/>
</dbReference>
<dbReference type="EMBL" id="U33057">
    <property type="protein sequence ID" value="AAB64960.1"/>
    <property type="molecule type" value="Genomic_DNA"/>
</dbReference>
<dbReference type="EMBL" id="AY558177">
    <property type="protein sequence ID" value="AAS56503.1"/>
    <property type="molecule type" value="Genomic_DNA"/>
</dbReference>
<dbReference type="EMBL" id="BK006938">
    <property type="protein sequence ID" value="DAA12350.1"/>
    <property type="molecule type" value="Genomic_DNA"/>
</dbReference>
<dbReference type="PIR" id="S25337">
    <property type="entry name" value="S25337"/>
</dbReference>
<dbReference type="RefSeq" id="NP_010807.3">
    <property type="nucleotide sequence ID" value="NM_001180827.3"/>
</dbReference>
<dbReference type="SMR" id="P32472"/>
<dbReference type="BioGRID" id="32570">
    <property type="interactions" value="47"/>
</dbReference>
<dbReference type="FunCoup" id="P32472">
    <property type="interactions" value="692"/>
</dbReference>
<dbReference type="IntAct" id="P32472">
    <property type="interactions" value="46"/>
</dbReference>
<dbReference type="MINT" id="P32472"/>
<dbReference type="STRING" id="4932.YDR519W"/>
<dbReference type="iPTMnet" id="P32472"/>
<dbReference type="PaxDb" id="4932-YDR519W"/>
<dbReference type="PeptideAtlas" id="P32472"/>
<dbReference type="EnsemblFungi" id="YDR519W_mRNA">
    <property type="protein sequence ID" value="YDR519W"/>
    <property type="gene ID" value="YDR519W"/>
</dbReference>
<dbReference type="GeneID" id="852131"/>
<dbReference type="KEGG" id="sce:YDR519W"/>
<dbReference type="AGR" id="SGD:S000002927"/>
<dbReference type="SGD" id="S000002927">
    <property type="gene designation" value="FPR2"/>
</dbReference>
<dbReference type="VEuPathDB" id="FungiDB:YDR519W"/>
<dbReference type="eggNOG" id="KOG0549">
    <property type="taxonomic scope" value="Eukaryota"/>
</dbReference>
<dbReference type="GeneTree" id="ENSGT00940000173147"/>
<dbReference type="HOGENOM" id="CLU_013615_8_2_1"/>
<dbReference type="InParanoid" id="P32472"/>
<dbReference type="OMA" id="KPASCEI"/>
<dbReference type="OrthoDB" id="1902587at2759"/>
<dbReference type="BioCyc" id="YEAST:YDR519W-MONOMER"/>
<dbReference type="BioGRID-ORCS" id="852131">
    <property type="hits" value="0 hits in 10 CRISPR screens"/>
</dbReference>
<dbReference type="PRO" id="PR:P32472"/>
<dbReference type="Proteomes" id="UP000002311">
    <property type="component" value="Chromosome IV"/>
</dbReference>
<dbReference type="RNAct" id="P32472">
    <property type="molecule type" value="protein"/>
</dbReference>
<dbReference type="GO" id="GO:0005737">
    <property type="term" value="C:cytoplasm"/>
    <property type="evidence" value="ECO:0007005"/>
    <property type="project" value="SGD"/>
</dbReference>
<dbReference type="GO" id="GO:0005783">
    <property type="term" value="C:endoplasmic reticulum"/>
    <property type="evidence" value="ECO:0000318"/>
    <property type="project" value="GO_Central"/>
</dbReference>
<dbReference type="GO" id="GO:0005789">
    <property type="term" value="C:endoplasmic reticulum membrane"/>
    <property type="evidence" value="ECO:0007669"/>
    <property type="project" value="UniProtKB-SubCell"/>
</dbReference>
<dbReference type="GO" id="GO:0000324">
    <property type="term" value="C:fungal-type vacuole"/>
    <property type="evidence" value="ECO:0007005"/>
    <property type="project" value="SGD"/>
</dbReference>
<dbReference type="GO" id="GO:0016020">
    <property type="term" value="C:membrane"/>
    <property type="evidence" value="ECO:0000314"/>
    <property type="project" value="SGD"/>
</dbReference>
<dbReference type="GO" id="GO:0005634">
    <property type="term" value="C:nucleus"/>
    <property type="evidence" value="ECO:0007005"/>
    <property type="project" value="SGD"/>
</dbReference>
<dbReference type="GO" id="GO:0005528">
    <property type="term" value="F:FK506 binding"/>
    <property type="evidence" value="ECO:0000314"/>
    <property type="project" value="SGD"/>
</dbReference>
<dbReference type="GO" id="GO:0003755">
    <property type="term" value="F:peptidyl-prolyl cis-trans isomerase activity"/>
    <property type="evidence" value="ECO:0000314"/>
    <property type="project" value="SGD"/>
</dbReference>
<dbReference type="GO" id="GO:0061077">
    <property type="term" value="P:chaperone-mediated protein folding"/>
    <property type="evidence" value="ECO:0007669"/>
    <property type="project" value="InterPro"/>
</dbReference>
<dbReference type="FunFam" id="3.10.50.40:FF:000006">
    <property type="entry name" value="Peptidyl-prolyl cis-trans isomerase"/>
    <property type="match status" value="1"/>
</dbReference>
<dbReference type="Gene3D" id="3.10.50.40">
    <property type="match status" value="1"/>
</dbReference>
<dbReference type="InterPro" id="IPR044609">
    <property type="entry name" value="FKBP2/11"/>
</dbReference>
<dbReference type="InterPro" id="IPR046357">
    <property type="entry name" value="PPIase_dom_sf"/>
</dbReference>
<dbReference type="InterPro" id="IPR001179">
    <property type="entry name" value="PPIase_FKBP_dom"/>
</dbReference>
<dbReference type="PANTHER" id="PTHR45779">
    <property type="entry name" value="PEPTIDYLPROLYL ISOMERASE"/>
    <property type="match status" value="1"/>
</dbReference>
<dbReference type="PANTHER" id="PTHR45779:SF7">
    <property type="entry name" value="PEPTIDYLPROLYL ISOMERASE"/>
    <property type="match status" value="1"/>
</dbReference>
<dbReference type="Pfam" id="PF00254">
    <property type="entry name" value="FKBP_C"/>
    <property type="match status" value="1"/>
</dbReference>
<dbReference type="SUPFAM" id="SSF54534">
    <property type="entry name" value="FKBP-like"/>
    <property type="match status" value="1"/>
</dbReference>
<dbReference type="PROSITE" id="PS50059">
    <property type="entry name" value="FKBP_PPIASE"/>
    <property type="match status" value="1"/>
</dbReference>
<evidence type="ECO:0000255" key="1">
    <source>
        <dbReference type="PROSITE-ProRule" id="PRU00277"/>
    </source>
</evidence>
<evidence type="ECO:0000269" key="2">
    <source>
    </source>
</evidence>
<evidence type="ECO:0000269" key="3">
    <source>
    </source>
</evidence>
<evidence type="ECO:0000303" key="4">
    <source>
    </source>
</evidence>
<evidence type="ECO:0000305" key="5"/>
<evidence type="ECO:0000305" key="6">
    <source>
    </source>
</evidence>
<keyword id="KW-0903">Direct protein sequencing</keyword>
<keyword id="KW-0256">Endoplasmic reticulum</keyword>
<keyword id="KW-0413">Isomerase</keyword>
<keyword id="KW-0472">Membrane</keyword>
<keyword id="KW-1185">Reference proteome</keyword>
<keyword id="KW-0697">Rotamase</keyword>
<keyword id="KW-0732">Signal</keyword>
<feature type="signal peptide" evidence="2">
    <location>
        <begin position="1"/>
        <end position="17"/>
    </location>
</feature>
<feature type="chain" id="PRO_0000025512" description="Peptidyl-prolyl cis-trans isomerase FPR2">
    <location>
        <begin position="18"/>
        <end position="135"/>
    </location>
</feature>
<feature type="domain" description="PPIase FKBP-type" evidence="1">
    <location>
        <begin position="43"/>
        <end position="132"/>
    </location>
</feature>